<gene>
    <name evidence="1" type="primary">der</name>
    <name type="synonym">engA</name>
    <name type="ordered locus">VF_0633</name>
</gene>
<accession>Q5E768</accession>
<comment type="function">
    <text evidence="1">GTPase that plays an essential role in the late steps of ribosome biogenesis.</text>
</comment>
<comment type="subunit">
    <text evidence="1">Associates with the 50S ribosomal subunit.</text>
</comment>
<comment type="similarity">
    <text evidence="1">Belongs to the TRAFAC class TrmE-Era-EngA-EngB-Septin-like GTPase superfamily. EngA (Der) GTPase family.</text>
</comment>
<feature type="chain" id="PRO_1000011780" description="GTPase Der">
    <location>
        <begin position="1"/>
        <end position="500"/>
    </location>
</feature>
<feature type="domain" description="EngA-type G 1">
    <location>
        <begin position="3"/>
        <end position="166"/>
    </location>
</feature>
<feature type="domain" description="EngA-type G 2">
    <location>
        <begin position="211"/>
        <end position="384"/>
    </location>
</feature>
<feature type="domain" description="KH-like" evidence="1">
    <location>
        <begin position="385"/>
        <end position="469"/>
    </location>
</feature>
<feature type="region of interest" description="Disordered" evidence="2">
    <location>
        <begin position="468"/>
        <end position="500"/>
    </location>
</feature>
<feature type="compositionally biased region" description="Basic residues" evidence="2">
    <location>
        <begin position="486"/>
        <end position="500"/>
    </location>
</feature>
<feature type="binding site" evidence="1">
    <location>
        <begin position="9"/>
        <end position="16"/>
    </location>
    <ligand>
        <name>GTP</name>
        <dbReference type="ChEBI" id="CHEBI:37565"/>
        <label>1</label>
    </ligand>
</feature>
<feature type="binding site" evidence="1">
    <location>
        <begin position="56"/>
        <end position="60"/>
    </location>
    <ligand>
        <name>GTP</name>
        <dbReference type="ChEBI" id="CHEBI:37565"/>
        <label>1</label>
    </ligand>
</feature>
<feature type="binding site" evidence="1">
    <location>
        <begin position="118"/>
        <end position="121"/>
    </location>
    <ligand>
        <name>GTP</name>
        <dbReference type="ChEBI" id="CHEBI:37565"/>
        <label>1</label>
    </ligand>
</feature>
<feature type="binding site" evidence="1">
    <location>
        <begin position="217"/>
        <end position="224"/>
    </location>
    <ligand>
        <name>GTP</name>
        <dbReference type="ChEBI" id="CHEBI:37565"/>
        <label>2</label>
    </ligand>
</feature>
<feature type="binding site" evidence="1">
    <location>
        <begin position="264"/>
        <end position="268"/>
    </location>
    <ligand>
        <name>GTP</name>
        <dbReference type="ChEBI" id="CHEBI:37565"/>
        <label>2</label>
    </ligand>
</feature>
<feature type="binding site" evidence="1">
    <location>
        <begin position="329"/>
        <end position="332"/>
    </location>
    <ligand>
        <name>GTP</name>
        <dbReference type="ChEBI" id="CHEBI:37565"/>
        <label>2</label>
    </ligand>
</feature>
<sequence>MIPVVALVGRPNVGKSTLFNRLTRTRDALVADFPGLTRDRKYGRAKLEEQEFILIDTGGIDGTEQGVETKMAEQSLAAIEEADVVLFMVDGRAGLTSADEAIAKHLRSREKPTFLVVNKIDGIDADAASAEFWQLGMNKVYQIAASHGRGVTSLLELALAPFMEELVEESLKDENGEITDLTEFEDFEDEEKDLTEEDAEKDFARLQDQPIKLAIIGRPNVGKSTLTNRILGEERVVVYDMPGTTRDSIYIPMEREGQEYVLIDTAGVRRRGRINETVEKFSVIKTLKAVEDANVVLLVIDARENISDQDLSLLGFALNAGRSLVIAVNKWDGLDNDVKEKVKSELDRRLGFVDFARIHFISALHGTGVGHLYESVQEAYVSATKRVGTSVLTRIMKMAQDDHQPPLVRGRRVKLKYAHAGGYNPPLIVIHGNQVKELPSSYKRFLMNYYRKSLEIMGTPIRIQFQNSENPFEDRGGKLTMSQERQRKRLLGAVKNRNKK</sequence>
<proteinExistence type="inferred from homology"/>
<organism>
    <name type="scientific">Aliivibrio fischeri (strain ATCC 700601 / ES114)</name>
    <name type="common">Vibrio fischeri</name>
    <dbReference type="NCBI Taxonomy" id="312309"/>
    <lineage>
        <taxon>Bacteria</taxon>
        <taxon>Pseudomonadati</taxon>
        <taxon>Pseudomonadota</taxon>
        <taxon>Gammaproteobacteria</taxon>
        <taxon>Vibrionales</taxon>
        <taxon>Vibrionaceae</taxon>
        <taxon>Aliivibrio</taxon>
    </lineage>
</organism>
<reference key="1">
    <citation type="journal article" date="2005" name="Proc. Natl. Acad. Sci. U.S.A.">
        <title>Complete genome sequence of Vibrio fischeri: a symbiotic bacterium with pathogenic congeners.</title>
        <authorList>
            <person name="Ruby E.G."/>
            <person name="Urbanowski M."/>
            <person name="Campbell J."/>
            <person name="Dunn A."/>
            <person name="Faini M."/>
            <person name="Gunsalus R."/>
            <person name="Lostroh P."/>
            <person name="Lupp C."/>
            <person name="McCann J."/>
            <person name="Millikan D."/>
            <person name="Schaefer A."/>
            <person name="Stabb E."/>
            <person name="Stevens A."/>
            <person name="Visick K."/>
            <person name="Whistler C."/>
            <person name="Greenberg E.P."/>
        </authorList>
    </citation>
    <scope>NUCLEOTIDE SEQUENCE [LARGE SCALE GENOMIC DNA]</scope>
    <source>
        <strain>ATCC 700601 / ES114</strain>
    </source>
</reference>
<protein>
    <recommendedName>
        <fullName evidence="1">GTPase Der</fullName>
    </recommendedName>
    <alternativeName>
        <fullName evidence="1">GTP-binding protein EngA</fullName>
    </alternativeName>
</protein>
<name>DER_ALIF1</name>
<dbReference type="EMBL" id="CP000020">
    <property type="protein sequence ID" value="AAW85128.1"/>
    <property type="molecule type" value="Genomic_DNA"/>
</dbReference>
<dbReference type="RefSeq" id="WP_011261369.1">
    <property type="nucleotide sequence ID" value="NZ_CAWLES010000001.1"/>
</dbReference>
<dbReference type="RefSeq" id="YP_204016.1">
    <property type="nucleotide sequence ID" value="NC_006840.2"/>
</dbReference>
<dbReference type="SMR" id="Q5E768"/>
<dbReference type="STRING" id="312309.VF_0633"/>
<dbReference type="EnsemblBacteria" id="AAW85128">
    <property type="protein sequence ID" value="AAW85128"/>
    <property type="gene ID" value="VF_0633"/>
</dbReference>
<dbReference type="GeneID" id="54163286"/>
<dbReference type="KEGG" id="vfi:VF_0633"/>
<dbReference type="PATRIC" id="fig|312309.11.peg.625"/>
<dbReference type="eggNOG" id="COG1160">
    <property type="taxonomic scope" value="Bacteria"/>
</dbReference>
<dbReference type="HOGENOM" id="CLU_016077_6_2_6"/>
<dbReference type="OrthoDB" id="9805918at2"/>
<dbReference type="Proteomes" id="UP000000537">
    <property type="component" value="Chromosome I"/>
</dbReference>
<dbReference type="GO" id="GO:0005525">
    <property type="term" value="F:GTP binding"/>
    <property type="evidence" value="ECO:0007669"/>
    <property type="project" value="UniProtKB-UniRule"/>
</dbReference>
<dbReference type="GO" id="GO:0043022">
    <property type="term" value="F:ribosome binding"/>
    <property type="evidence" value="ECO:0007669"/>
    <property type="project" value="TreeGrafter"/>
</dbReference>
<dbReference type="GO" id="GO:0042254">
    <property type="term" value="P:ribosome biogenesis"/>
    <property type="evidence" value="ECO:0007669"/>
    <property type="project" value="UniProtKB-KW"/>
</dbReference>
<dbReference type="CDD" id="cd01894">
    <property type="entry name" value="EngA1"/>
    <property type="match status" value="1"/>
</dbReference>
<dbReference type="CDD" id="cd01895">
    <property type="entry name" value="EngA2"/>
    <property type="match status" value="1"/>
</dbReference>
<dbReference type="FunFam" id="3.30.300.20:FF:000004">
    <property type="entry name" value="GTPase Der"/>
    <property type="match status" value="1"/>
</dbReference>
<dbReference type="FunFam" id="3.40.50.300:FF:000040">
    <property type="entry name" value="GTPase Der"/>
    <property type="match status" value="1"/>
</dbReference>
<dbReference type="FunFam" id="3.40.50.300:FF:000057">
    <property type="entry name" value="GTPase Der"/>
    <property type="match status" value="1"/>
</dbReference>
<dbReference type="Gene3D" id="3.30.300.20">
    <property type="match status" value="1"/>
</dbReference>
<dbReference type="Gene3D" id="3.40.50.300">
    <property type="entry name" value="P-loop containing nucleotide triphosphate hydrolases"/>
    <property type="match status" value="2"/>
</dbReference>
<dbReference type="HAMAP" id="MF_00195">
    <property type="entry name" value="GTPase_Der"/>
    <property type="match status" value="1"/>
</dbReference>
<dbReference type="InterPro" id="IPR031166">
    <property type="entry name" value="G_ENGA"/>
</dbReference>
<dbReference type="InterPro" id="IPR006073">
    <property type="entry name" value="GTP-bd"/>
</dbReference>
<dbReference type="InterPro" id="IPR016484">
    <property type="entry name" value="GTPase_Der"/>
</dbReference>
<dbReference type="InterPro" id="IPR032859">
    <property type="entry name" value="KH_dom-like"/>
</dbReference>
<dbReference type="InterPro" id="IPR015946">
    <property type="entry name" value="KH_dom-like_a/b"/>
</dbReference>
<dbReference type="InterPro" id="IPR027417">
    <property type="entry name" value="P-loop_NTPase"/>
</dbReference>
<dbReference type="InterPro" id="IPR005225">
    <property type="entry name" value="Small_GTP-bd"/>
</dbReference>
<dbReference type="NCBIfam" id="TIGR03594">
    <property type="entry name" value="GTPase_EngA"/>
    <property type="match status" value="1"/>
</dbReference>
<dbReference type="NCBIfam" id="TIGR00231">
    <property type="entry name" value="small_GTP"/>
    <property type="match status" value="2"/>
</dbReference>
<dbReference type="PANTHER" id="PTHR43834">
    <property type="entry name" value="GTPASE DER"/>
    <property type="match status" value="1"/>
</dbReference>
<dbReference type="PANTHER" id="PTHR43834:SF6">
    <property type="entry name" value="GTPASE DER"/>
    <property type="match status" value="1"/>
</dbReference>
<dbReference type="Pfam" id="PF14714">
    <property type="entry name" value="KH_dom-like"/>
    <property type="match status" value="1"/>
</dbReference>
<dbReference type="Pfam" id="PF01926">
    <property type="entry name" value="MMR_HSR1"/>
    <property type="match status" value="2"/>
</dbReference>
<dbReference type="PIRSF" id="PIRSF006485">
    <property type="entry name" value="GTP-binding_EngA"/>
    <property type="match status" value="1"/>
</dbReference>
<dbReference type="PRINTS" id="PR00326">
    <property type="entry name" value="GTP1OBG"/>
</dbReference>
<dbReference type="SUPFAM" id="SSF52540">
    <property type="entry name" value="P-loop containing nucleoside triphosphate hydrolases"/>
    <property type="match status" value="2"/>
</dbReference>
<dbReference type="PROSITE" id="PS51712">
    <property type="entry name" value="G_ENGA"/>
    <property type="match status" value="2"/>
</dbReference>
<keyword id="KW-0342">GTP-binding</keyword>
<keyword id="KW-0547">Nucleotide-binding</keyword>
<keyword id="KW-1185">Reference proteome</keyword>
<keyword id="KW-0677">Repeat</keyword>
<keyword id="KW-0690">Ribosome biogenesis</keyword>
<evidence type="ECO:0000255" key="1">
    <source>
        <dbReference type="HAMAP-Rule" id="MF_00195"/>
    </source>
</evidence>
<evidence type="ECO:0000256" key="2">
    <source>
        <dbReference type="SAM" id="MobiDB-lite"/>
    </source>
</evidence>